<keyword id="KW-0067">ATP-binding</keyword>
<keyword id="KW-0418">Kinase</keyword>
<keyword id="KW-0547">Nucleotide-binding</keyword>
<keyword id="KW-0553">Oncogene</keyword>
<keyword id="KW-0597">Phosphoprotein</keyword>
<keyword id="KW-0727">SH2 domain</keyword>
<keyword id="KW-0808">Transferase</keyword>
<keyword id="KW-0829">Tyrosine-protein kinase</keyword>
<evidence type="ECO:0000250" key="1"/>
<evidence type="ECO:0000255" key="2">
    <source>
        <dbReference type="PROSITE-ProRule" id="PRU00159"/>
    </source>
</evidence>
<evidence type="ECO:0000255" key="3">
    <source>
        <dbReference type="PROSITE-ProRule" id="PRU00191"/>
    </source>
</evidence>
<evidence type="ECO:0000255" key="4">
    <source>
        <dbReference type="PROSITE-ProRule" id="PRU01077"/>
    </source>
</evidence>
<evidence type="ECO:0000255" key="5">
    <source>
        <dbReference type="PROSITE-ProRule" id="PRU10028"/>
    </source>
</evidence>
<evidence type="ECO:0000256" key="6">
    <source>
        <dbReference type="SAM" id="MobiDB-lite"/>
    </source>
</evidence>
<evidence type="ECO:0000305" key="7"/>
<comment type="catalytic activity">
    <reaction evidence="5">
        <text>L-tyrosyl-[protein] + ATP = O-phospho-L-tyrosyl-[protein] + ADP + H(+)</text>
        <dbReference type="Rhea" id="RHEA:10596"/>
        <dbReference type="Rhea" id="RHEA-COMP:10136"/>
        <dbReference type="Rhea" id="RHEA-COMP:20101"/>
        <dbReference type="ChEBI" id="CHEBI:15378"/>
        <dbReference type="ChEBI" id="CHEBI:30616"/>
        <dbReference type="ChEBI" id="CHEBI:46858"/>
        <dbReference type="ChEBI" id="CHEBI:61978"/>
        <dbReference type="ChEBI" id="CHEBI:456216"/>
        <dbReference type="EC" id="2.7.10.2"/>
    </reaction>
</comment>
<comment type="domain">
    <text evidence="7">The F-BAR domain is truncated and contains only the FCH region (the coiled-coil region is missing).</text>
</comment>
<comment type="miscellaneous">
    <text>This protein is synthesized as a Gag-Fes polyprotein.</text>
</comment>
<comment type="similarity">
    <text evidence="2">Belongs to the protein kinase superfamily. Tyr protein kinase family. Fes/fps subfamily.</text>
</comment>
<comment type="sequence caution" evidence="7">
    <conflict type="erroneous initiation">
        <sequence resource="EMBL-CDS" id="AAA43041"/>
    </conflict>
</comment>
<dbReference type="EC" id="2.7.10.2"/>
<dbReference type="EMBL" id="J02087">
    <property type="protein sequence ID" value="AAA43041.1"/>
    <property type="status" value="ALT_INIT"/>
    <property type="molecule type" value="Genomic_RNA"/>
</dbReference>
<dbReference type="PIR" id="A00651">
    <property type="entry name" value="TVMVGC"/>
</dbReference>
<dbReference type="SMR" id="P00542"/>
<dbReference type="BRENDA" id="2.7.10.2">
    <property type="organism ID" value="2234"/>
</dbReference>
<dbReference type="GO" id="GO:0005524">
    <property type="term" value="F:ATP binding"/>
    <property type="evidence" value="ECO:0007669"/>
    <property type="project" value="UniProtKB-KW"/>
</dbReference>
<dbReference type="GO" id="GO:0004715">
    <property type="term" value="F:non-membrane spanning protein tyrosine kinase activity"/>
    <property type="evidence" value="ECO:0007669"/>
    <property type="project" value="UniProtKB-EC"/>
</dbReference>
<dbReference type="CDD" id="cd10361">
    <property type="entry name" value="SH2_Fps_family"/>
    <property type="match status" value="1"/>
</dbReference>
<dbReference type="FunFam" id="1.10.510.10:FF:000212">
    <property type="entry name" value="Tyrosine-protein kinase"/>
    <property type="match status" value="1"/>
</dbReference>
<dbReference type="FunFam" id="3.30.200.20:FF:000089">
    <property type="entry name" value="Tyrosine-protein kinase"/>
    <property type="match status" value="1"/>
</dbReference>
<dbReference type="FunFam" id="3.30.505.10:FF:000020">
    <property type="entry name" value="Tyrosine-protein kinase"/>
    <property type="match status" value="1"/>
</dbReference>
<dbReference type="Gene3D" id="1.20.1270.60">
    <property type="entry name" value="Arfaptin homology (AH) domain/BAR domain"/>
    <property type="match status" value="1"/>
</dbReference>
<dbReference type="Gene3D" id="3.30.200.20">
    <property type="entry name" value="Phosphorylase Kinase, domain 1"/>
    <property type="match status" value="1"/>
</dbReference>
<dbReference type="Gene3D" id="3.30.505.10">
    <property type="entry name" value="SH2 domain"/>
    <property type="match status" value="1"/>
</dbReference>
<dbReference type="Gene3D" id="1.10.510.10">
    <property type="entry name" value="Transferase(Phosphotransferase) domain 1"/>
    <property type="match status" value="1"/>
</dbReference>
<dbReference type="InterPro" id="IPR027267">
    <property type="entry name" value="AH/BAR_dom_sf"/>
</dbReference>
<dbReference type="InterPro" id="IPR031160">
    <property type="entry name" value="F_BAR"/>
</dbReference>
<dbReference type="InterPro" id="IPR001060">
    <property type="entry name" value="FCH_dom"/>
</dbReference>
<dbReference type="InterPro" id="IPR035849">
    <property type="entry name" value="Fes/Fps/Fer_SH2"/>
</dbReference>
<dbReference type="InterPro" id="IPR011009">
    <property type="entry name" value="Kinase-like_dom_sf"/>
</dbReference>
<dbReference type="InterPro" id="IPR050198">
    <property type="entry name" value="Non-receptor_tyrosine_kinases"/>
</dbReference>
<dbReference type="InterPro" id="IPR000719">
    <property type="entry name" value="Prot_kinase_dom"/>
</dbReference>
<dbReference type="InterPro" id="IPR017441">
    <property type="entry name" value="Protein_kinase_ATP_BS"/>
</dbReference>
<dbReference type="InterPro" id="IPR001245">
    <property type="entry name" value="Ser-Thr/Tyr_kinase_cat_dom"/>
</dbReference>
<dbReference type="InterPro" id="IPR000980">
    <property type="entry name" value="SH2"/>
</dbReference>
<dbReference type="InterPro" id="IPR036860">
    <property type="entry name" value="SH2_dom_sf"/>
</dbReference>
<dbReference type="InterPro" id="IPR008266">
    <property type="entry name" value="Tyr_kinase_AS"/>
</dbReference>
<dbReference type="InterPro" id="IPR020635">
    <property type="entry name" value="Tyr_kinase_cat_dom"/>
</dbReference>
<dbReference type="PANTHER" id="PTHR24418">
    <property type="entry name" value="TYROSINE-PROTEIN KINASE"/>
    <property type="match status" value="1"/>
</dbReference>
<dbReference type="Pfam" id="PF00611">
    <property type="entry name" value="FCH"/>
    <property type="match status" value="1"/>
</dbReference>
<dbReference type="Pfam" id="PF07714">
    <property type="entry name" value="PK_Tyr_Ser-Thr"/>
    <property type="match status" value="1"/>
</dbReference>
<dbReference type="Pfam" id="PF00017">
    <property type="entry name" value="SH2"/>
    <property type="match status" value="1"/>
</dbReference>
<dbReference type="PRINTS" id="PR00401">
    <property type="entry name" value="SH2DOMAIN"/>
</dbReference>
<dbReference type="PRINTS" id="PR00109">
    <property type="entry name" value="TYRKINASE"/>
</dbReference>
<dbReference type="SMART" id="SM00055">
    <property type="entry name" value="FCH"/>
    <property type="match status" value="1"/>
</dbReference>
<dbReference type="SMART" id="SM00252">
    <property type="entry name" value="SH2"/>
    <property type="match status" value="1"/>
</dbReference>
<dbReference type="SMART" id="SM00219">
    <property type="entry name" value="TyrKc"/>
    <property type="match status" value="1"/>
</dbReference>
<dbReference type="SUPFAM" id="SSF103657">
    <property type="entry name" value="BAR/IMD domain-like"/>
    <property type="match status" value="1"/>
</dbReference>
<dbReference type="SUPFAM" id="SSF56112">
    <property type="entry name" value="Protein kinase-like (PK-like)"/>
    <property type="match status" value="1"/>
</dbReference>
<dbReference type="SUPFAM" id="SSF55550">
    <property type="entry name" value="SH2 domain"/>
    <property type="match status" value="1"/>
</dbReference>
<dbReference type="PROSITE" id="PS51741">
    <property type="entry name" value="F_BAR"/>
    <property type="match status" value="1"/>
</dbReference>
<dbReference type="PROSITE" id="PS00107">
    <property type="entry name" value="PROTEIN_KINASE_ATP"/>
    <property type="match status" value="1"/>
</dbReference>
<dbReference type="PROSITE" id="PS50011">
    <property type="entry name" value="PROTEIN_KINASE_DOM"/>
    <property type="match status" value="1"/>
</dbReference>
<dbReference type="PROSITE" id="PS00109">
    <property type="entry name" value="PROTEIN_KINASE_TYR"/>
    <property type="match status" value="1"/>
</dbReference>
<dbReference type="PROSITE" id="PS50001">
    <property type="entry name" value="SH2"/>
    <property type="match status" value="1"/>
</dbReference>
<sequence>AARADGTMGFSSELCSPQGHGAEQQMQEAELRLLEGMRKWMAQRVKSDREYAGLLHHMSLQDGGGRGTGPYSPISQSWAEITSQTEGLSRLLRQHAEDLNSGPLSKLGLLIRERQQLRKTYSEQWQQLQQELTKTHNQDIEKLKSQYRALARDSAQARRKYQEASKDKDRDKAKLEQLGPGEPPPVLLLQDDRHSTSSSEQEREGGRTPTLEILKSHISGIFRPKFSLPPPLQLVPEVQKPLHEQLWYHGALPRAEVAELLTHSGDFLVRESQGKQEYVLSVLWDGQPRHFIIQSADNLYRPEGDGFASIPLLVDHLLRSQQPLTKKSGIVLNRAVPKDKWVLNHEDLVLGEQIGRGNFGEVFSGRLRADNTLVAVKSCRETLPPDIKAKFLQEAKILKQYSHPNIVRLIGVCTQKQPIYIVMELVQGGDFLTFLRTEGARLRMKTLLQMVGDAAAGMEYLESKCCIHRDLAARNCLVTEKNVLKISDFGMSREAADGIYAASGGLRQVPVKWTAPEALNYGRYSSESDVWSFGILLWETFSLGASPYPNLSNQQTREFVEKGGRLPCPELCPDAVFRLMEQCWAYEPGQRPSFSAIYQELQSIRKRHR</sequence>
<name>FES_FSVGA</name>
<feature type="chain" id="PRO_0000088087" description="Tyrosine-protein kinase transforming protein Fes">
    <location>
        <begin position="1"/>
        <end position="609"/>
    </location>
</feature>
<feature type="domain" description="F-BAR; degenerate" evidence="4">
    <location>
        <begin position="8"/>
        <end position="174"/>
    </location>
</feature>
<feature type="domain" description="SH2" evidence="3">
    <location>
        <begin position="247"/>
        <end position="336"/>
    </location>
</feature>
<feature type="domain" description="Protein kinase" evidence="2">
    <location>
        <begin position="348"/>
        <end position="609"/>
    </location>
</feature>
<feature type="region of interest" description="Disordered" evidence="6">
    <location>
        <begin position="1"/>
        <end position="20"/>
    </location>
</feature>
<feature type="region of interest" description="Disordered" evidence="6">
    <location>
        <begin position="152"/>
        <end position="208"/>
    </location>
</feature>
<feature type="compositionally biased region" description="Basic and acidic residues" evidence="6">
    <location>
        <begin position="160"/>
        <end position="175"/>
    </location>
</feature>
<feature type="compositionally biased region" description="Basic and acidic residues" evidence="6">
    <location>
        <begin position="190"/>
        <end position="206"/>
    </location>
</feature>
<feature type="active site" description="Proton acceptor" evidence="2 5">
    <location>
        <position position="470"/>
    </location>
</feature>
<feature type="binding site" evidence="2">
    <location>
        <begin position="354"/>
        <end position="362"/>
    </location>
    <ligand>
        <name>ATP</name>
        <dbReference type="ChEBI" id="CHEBI:30616"/>
    </ligand>
</feature>
<feature type="binding site" evidence="2">
    <location>
        <position position="377"/>
    </location>
    <ligand>
        <name>ATP</name>
        <dbReference type="ChEBI" id="CHEBI:30616"/>
    </ligand>
</feature>
<feature type="modified residue" description="Phosphotyrosine; by autocatalysis" evidence="1">
    <location>
        <position position="500"/>
    </location>
</feature>
<accession>P00542</accession>
<organismHost>
    <name type="scientific">Felidae</name>
    <name type="common">cat family</name>
    <dbReference type="NCBI Taxonomy" id="9681"/>
</organismHost>
<proteinExistence type="inferred from homology"/>
<reference key="1">
    <citation type="journal article" date="1982" name="Cell">
        <title>Nucleotide sequences of feline retroviral oncogenes (v-fes) provide evidence for a family of tyrosine-specific protein kinase genes.</title>
        <authorList>
            <person name="Hampe A."/>
            <person name="Laprevotte I."/>
            <person name="Galibert F."/>
            <person name="Fedele L.A."/>
            <person name="Sherr C.J."/>
        </authorList>
    </citation>
    <scope>NUCLEOTIDE SEQUENCE [GENOMIC RNA]</scope>
</reference>
<gene>
    <name type="primary">V-FES</name>
</gene>
<protein>
    <recommendedName>
        <fullName>Tyrosine-protein kinase transforming protein Fes</fullName>
        <ecNumber>2.7.10.2</ecNumber>
    </recommendedName>
</protein>
<organism>
    <name type="scientific">Feline sarcoma virus (strain Gardner-Arnstein)</name>
    <name type="common">Ga-FeSV</name>
    <name type="synonym">Gardner-Arnstein feline leukemia oncovirus B</name>
    <dbReference type="NCBI Taxonomy" id="11774"/>
    <lineage>
        <taxon>Viruses</taxon>
        <taxon>Riboviria</taxon>
        <taxon>Pararnavirae</taxon>
        <taxon>Artverviricota</taxon>
        <taxon>Revtraviricetes</taxon>
        <taxon>Ortervirales</taxon>
        <taxon>Retroviridae</taxon>
        <taxon>Orthoretrovirinae</taxon>
        <taxon>Gammaretrovirus</taxon>
    </lineage>
</organism>